<evidence type="ECO:0000255" key="1">
    <source>
        <dbReference type="HAMAP-Rule" id="MF_01638"/>
    </source>
</evidence>
<gene>
    <name evidence="1" type="primary">pdxK</name>
    <name type="ordered locus">E2348C_2604</name>
</gene>
<organism>
    <name type="scientific">Escherichia coli O127:H6 (strain E2348/69 / EPEC)</name>
    <dbReference type="NCBI Taxonomy" id="574521"/>
    <lineage>
        <taxon>Bacteria</taxon>
        <taxon>Pseudomonadati</taxon>
        <taxon>Pseudomonadota</taxon>
        <taxon>Gammaproteobacteria</taxon>
        <taxon>Enterobacterales</taxon>
        <taxon>Enterobacteriaceae</taxon>
        <taxon>Escherichia</taxon>
    </lineage>
</organism>
<comment type="function">
    <text evidence="1">B6-vitamer kinase involved in the salvage pathway of pyridoxal 5'-phosphate (PLP). Catalyzes the phosphorylation of pyridoxine (PN), pyridoxal (PL), and pyridoxamine (PM), forming their respective 5'-phosphorylated esters, i.e. PNP, PLP and PMP.</text>
</comment>
<comment type="catalytic activity">
    <reaction evidence="1">
        <text>pyridoxal + ATP = pyridoxal 5'-phosphate + ADP + H(+)</text>
        <dbReference type="Rhea" id="RHEA:10224"/>
        <dbReference type="ChEBI" id="CHEBI:15378"/>
        <dbReference type="ChEBI" id="CHEBI:17310"/>
        <dbReference type="ChEBI" id="CHEBI:30616"/>
        <dbReference type="ChEBI" id="CHEBI:456216"/>
        <dbReference type="ChEBI" id="CHEBI:597326"/>
        <dbReference type="EC" id="2.7.1.35"/>
    </reaction>
</comment>
<comment type="catalytic activity">
    <reaction evidence="1">
        <text>pyridoxine + ATP = pyridoxine 5'-phosphate + ADP + H(+)</text>
        <dbReference type="Rhea" id="RHEA:25108"/>
        <dbReference type="ChEBI" id="CHEBI:15378"/>
        <dbReference type="ChEBI" id="CHEBI:16709"/>
        <dbReference type="ChEBI" id="CHEBI:30616"/>
        <dbReference type="ChEBI" id="CHEBI:58589"/>
        <dbReference type="ChEBI" id="CHEBI:456216"/>
        <dbReference type="EC" id="2.7.1.35"/>
    </reaction>
</comment>
<comment type="catalytic activity">
    <reaction evidence="1">
        <text>pyridoxamine + ATP = pyridoxamine 5'-phosphate + ADP + H(+)</text>
        <dbReference type="Rhea" id="RHEA:25104"/>
        <dbReference type="ChEBI" id="CHEBI:15378"/>
        <dbReference type="ChEBI" id="CHEBI:30616"/>
        <dbReference type="ChEBI" id="CHEBI:57761"/>
        <dbReference type="ChEBI" id="CHEBI:58451"/>
        <dbReference type="ChEBI" id="CHEBI:456216"/>
        <dbReference type="EC" id="2.7.1.35"/>
    </reaction>
</comment>
<comment type="cofactor">
    <cofactor evidence="1">
        <name>Mg(2+)</name>
        <dbReference type="ChEBI" id="CHEBI:18420"/>
    </cofactor>
</comment>
<comment type="pathway">
    <text evidence="1">Cofactor metabolism; pyridoxal 5'-phosphate salvage; pyridoxal 5'-phosphate from pyridoxal: step 1/1.</text>
</comment>
<comment type="pathway">
    <text evidence="1">Cofactor metabolism; pyridoxal 5'-phosphate salvage; pyridoxine 5'-phosphate from pyridoxine: step 1/1.</text>
</comment>
<comment type="pathway">
    <text evidence="1">Cofactor metabolism; pyridoxal 5'-phosphate salvage; pyridoxamine 5'-phosphate from pyridoxamine: step 1/1.</text>
</comment>
<comment type="subunit">
    <text evidence="1">Homodimer.</text>
</comment>
<comment type="similarity">
    <text evidence="1">Belongs to the pyridoxine kinase family. PdxK subfamily.</text>
</comment>
<accession>B7UGB9</accession>
<dbReference type="EC" id="2.7.1.35" evidence="1"/>
<dbReference type="EMBL" id="FM180568">
    <property type="protein sequence ID" value="CAS10152.1"/>
    <property type="molecule type" value="Genomic_DNA"/>
</dbReference>
<dbReference type="RefSeq" id="WP_000096660.1">
    <property type="nucleotide sequence ID" value="NC_011601.1"/>
</dbReference>
<dbReference type="SMR" id="B7UGB9"/>
<dbReference type="GeneID" id="93774712"/>
<dbReference type="KEGG" id="ecg:E2348C_2604"/>
<dbReference type="HOGENOM" id="CLU_046496_3_1_6"/>
<dbReference type="UniPathway" id="UPA01068">
    <property type="reaction ID" value="UER00298"/>
</dbReference>
<dbReference type="UniPathway" id="UPA01068">
    <property type="reaction ID" value="UER00299"/>
</dbReference>
<dbReference type="UniPathway" id="UPA01068">
    <property type="reaction ID" value="UER00300"/>
</dbReference>
<dbReference type="Proteomes" id="UP000008205">
    <property type="component" value="Chromosome"/>
</dbReference>
<dbReference type="GO" id="GO:0005829">
    <property type="term" value="C:cytosol"/>
    <property type="evidence" value="ECO:0007669"/>
    <property type="project" value="TreeGrafter"/>
</dbReference>
<dbReference type="GO" id="GO:0005524">
    <property type="term" value="F:ATP binding"/>
    <property type="evidence" value="ECO:0007669"/>
    <property type="project" value="UniProtKB-UniRule"/>
</dbReference>
<dbReference type="GO" id="GO:0008902">
    <property type="term" value="F:hydroxymethylpyrimidine kinase activity"/>
    <property type="evidence" value="ECO:0007669"/>
    <property type="project" value="TreeGrafter"/>
</dbReference>
<dbReference type="GO" id="GO:0000287">
    <property type="term" value="F:magnesium ion binding"/>
    <property type="evidence" value="ECO:0007669"/>
    <property type="project" value="UniProtKB-UniRule"/>
</dbReference>
<dbReference type="GO" id="GO:0008478">
    <property type="term" value="F:pyridoxal kinase activity"/>
    <property type="evidence" value="ECO:0007669"/>
    <property type="project" value="UniProtKB-UniRule"/>
</dbReference>
<dbReference type="GO" id="GO:0008270">
    <property type="term" value="F:zinc ion binding"/>
    <property type="evidence" value="ECO:0007669"/>
    <property type="project" value="UniProtKB-UniRule"/>
</dbReference>
<dbReference type="GO" id="GO:0009443">
    <property type="term" value="P:pyridoxal 5'-phosphate salvage"/>
    <property type="evidence" value="ECO:0007669"/>
    <property type="project" value="UniProtKB-UniRule"/>
</dbReference>
<dbReference type="CDD" id="cd01173">
    <property type="entry name" value="pyridoxal_pyridoxamine_kinase"/>
    <property type="match status" value="1"/>
</dbReference>
<dbReference type="FunFam" id="3.40.1190.20:FF:000009">
    <property type="entry name" value="Pyridoxine/pyridoxal/pyridoxamine kinase"/>
    <property type="match status" value="1"/>
</dbReference>
<dbReference type="Gene3D" id="3.40.1190.20">
    <property type="match status" value="1"/>
</dbReference>
<dbReference type="HAMAP" id="MF_01638">
    <property type="entry name" value="PdxK"/>
    <property type="match status" value="1"/>
</dbReference>
<dbReference type="InterPro" id="IPR023479">
    <property type="entry name" value="PdxK"/>
</dbReference>
<dbReference type="InterPro" id="IPR013749">
    <property type="entry name" value="PM/HMP-P_kinase-1"/>
</dbReference>
<dbReference type="InterPro" id="IPR004625">
    <property type="entry name" value="PyrdxlKinase"/>
</dbReference>
<dbReference type="InterPro" id="IPR029056">
    <property type="entry name" value="Ribokinase-like"/>
</dbReference>
<dbReference type="NCBIfam" id="NF006034">
    <property type="entry name" value="PRK08176.1"/>
    <property type="match status" value="1"/>
</dbReference>
<dbReference type="NCBIfam" id="TIGR00687">
    <property type="entry name" value="pyridox_kin"/>
    <property type="match status" value="1"/>
</dbReference>
<dbReference type="PANTHER" id="PTHR10534">
    <property type="entry name" value="PYRIDOXAL KINASE"/>
    <property type="match status" value="1"/>
</dbReference>
<dbReference type="PANTHER" id="PTHR10534:SF15">
    <property type="entry name" value="PYRIDOXINE_PYRIDOXAL_PYRIDOXAMINE KINASE"/>
    <property type="match status" value="1"/>
</dbReference>
<dbReference type="Pfam" id="PF08543">
    <property type="entry name" value="Phos_pyr_kin"/>
    <property type="match status" value="1"/>
</dbReference>
<dbReference type="SUPFAM" id="SSF53613">
    <property type="entry name" value="Ribokinase-like"/>
    <property type="match status" value="1"/>
</dbReference>
<feature type="chain" id="PRO_1000186798" description="Pyridoxine/pyridoxal/pyridoxamine kinase">
    <location>
        <begin position="1"/>
        <end position="283"/>
    </location>
</feature>
<feature type="binding site" evidence="1">
    <location>
        <position position="23"/>
    </location>
    <ligand>
        <name>substrate</name>
    </ligand>
</feature>
<feature type="binding site" evidence="1">
    <location>
        <position position="59"/>
    </location>
    <ligand>
        <name>substrate</name>
    </ligand>
</feature>
<feature type="binding site" evidence="1">
    <location>
        <position position="125"/>
    </location>
    <ligand>
        <name>ATP</name>
        <dbReference type="ChEBI" id="CHEBI:30616"/>
    </ligand>
</feature>
<feature type="binding site" evidence="1">
    <location>
        <position position="136"/>
    </location>
    <ligand>
        <name>Mg(2+)</name>
        <dbReference type="ChEBI" id="CHEBI:18420"/>
    </ligand>
</feature>
<feature type="binding site" evidence="1">
    <location>
        <position position="157"/>
    </location>
    <ligand>
        <name>ATP</name>
        <dbReference type="ChEBI" id="CHEBI:30616"/>
    </ligand>
</feature>
<feature type="binding site" evidence="1">
    <location>
        <position position="162"/>
    </location>
    <ligand>
        <name>ATP</name>
        <dbReference type="ChEBI" id="CHEBI:30616"/>
    </ligand>
</feature>
<feature type="binding site" evidence="1">
    <location>
        <position position="162"/>
    </location>
    <ligand>
        <name>Mg(2+)</name>
        <dbReference type="ChEBI" id="CHEBI:18420"/>
    </ligand>
</feature>
<feature type="binding site" evidence="1">
    <location>
        <position position="195"/>
    </location>
    <ligand>
        <name>ATP</name>
        <dbReference type="ChEBI" id="CHEBI:30616"/>
    </ligand>
</feature>
<feature type="binding site" evidence="1">
    <location>
        <begin position="221"/>
        <end position="224"/>
    </location>
    <ligand>
        <name>ATP</name>
        <dbReference type="ChEBI" id="CHEBI:30616"/>
    </ligand>
</feature>
<feature type="binding site" evidence="1">
    <location>
        <position position="231"/>
    </location>
    <ligand>
        <name>ATP</name>
        <dbReference type="ChEBI" id="CHEBI:30616"/>
    </ligand>
</feature>
<feature type="binding site" evidence="1">
    <location>
        <position position="233"/>
    </location>
    <ligand>
        <name>substrate</name>
    </ligand>
</feature>
<reference key="1">
    <citation type="journal article" date="2009" name="J. Bacteriol.">
        <title>Complete genome sequence and comparative genome analysis of enteropathogenic Escherichia coli O127:H6 strain E2348/69.</title>
        <authorList>
            <person name="Iguchi A."/>
            <person name="Thomson N.R."/>
            <person name="Ogura Y."/>
            <person name="Saunders D."/>
            <person name="Ooka T."/>
            <person name="Henderson I.R."/>
            <person name="Harris D."/>
            <person name="Asadulghani M."/>
            <person name="Kurokawa K."/>
            <person name="Dean P."/>
            <person name="Kenny B."/>
            <person name="Quail M.A."/>
            <person name="Thurston S."/>
            <person name="Dougan G."/>
            <person name="Hayashi T."/>
            <person name="Parkhill J."/>
            <person name="Frankel G."/>
        </authorList>
    </citation>
    <scope>NUCLEOTIDE SEQUENCE [LARGE SCALE GENOMIC DNA]</scope>
    <source>
        <strain>E2348/69 / EPEC</strain>
    </source>
</reference>
<keyword id="KW-0067">ATP-binding</keyword>
<keyword id="KW-0418">Kinase</keyword>
<keyword id="KW-0460">Magnesium</keyword>
<keyword id="KW-0479">Metal-binding</keyword>
<keyword id="KW-0547">Nucleotide-binding</keyword>
<keyword id="KW-1185">Reference proteome</keyword>
<keyword id="KW-0808">Transferase</keyword>
<keyword id="KW-0862">Zinc</keyword>
<proteinExistence type="inferred from homology"/>
<name>PDXK_ECO27</name>
<protein>
    <recommendedName>
        <fullName evidence="1">Pyridoxine/pyridoxal/pyridoxamine kinase</fullName>
        <shortName evidence="1">PN/PL/PM kinase</shortName>
        <ecNumber evidence="1">2.7.1.35</ecNumber>
    </recommendedName>
    <alternativeName>
        <fullName evidence="1">B6-vitamer kinase</fullName>
    </alternativeName>
</protein>
<sequence length="283" mass="30860">MSSLLLFNDKSRALQADIVAVQSQVVYGSVGNSIAVPAIKQNGLNVFAVPTVLLSNTPHYDTFYGGAIPDEWFSGYLRALQERDALRQLRAVTTGYMGTASQIKILAEWLTALRKDHPDLLIMVDPVIGDIDSGIYVKPDLPEAYRQYLLPLAQGITPNIFELEILTGKNCRDLDSAIAAAKSLLSDTLKWVVITSASGNEENQEMQVVVVSADSVNVISHSRVKTDLKGTGDLFCAQLISGLLKGKALNDAVHRAGLRVLEVMRYTQQHESDELILPPLAEA</sequence>